<evidence type="ECO:0000255" key="1">
    <source>
        <dbReference type="HAMAP-Rule" id="MF_00186"/>
    </source>
</evidence>
<proteinExistence type="inferred from homology"/>
<sequence length="495" mass="53754">MDKQYVVALDQGTTSSRAIVFDRDANLVAVSQREFTQIYPKGGWVEHDPMEIWASQSSTLIEVLARAGIHSDEVAAIGITNQRETTIIWDKLTGKPVCNAIVWQCRRSAAICEALKAQGLEPLFRDKTGLLLDPYFSGTKIKWILDNVPGVRERADAGELLFGTVDTWLVWKLTEGKVHVTDPTNASRTLMYNIHSGEWDSELLKALDIPASLLPEVKSSQAVYGTTRIAGEGTEIPVAGMAGDQQAALFGQLCVEPGMAKNTYGTGCFLLMNTGKQAVKSEHGLLTTIAVGDDGGISYALEGAVFMGGATIQWLRDELGLIRDASDTEYFASKVDDTNGVYLVPAFVGLGAPYWDPDARGTLVGLTRGANRNHIIRAALESIAYQSRDLLDAMSKDSGVALKQLKVDGGAVANDFLMQFQADISGVEVLRPAQTETTAMGAAFLGGLAVGFWSNVDEIRHKSGIDRRFVPLMDDKERATLYLGWQDAVRRSLSS</sequence>
<protein>
    <recommendedName>
        <fullName evidence="1">Glycerol kinase</fullName>
        <ecNumber evidence="1">2.7.1.30</ecNumber>
    </recommendedName>
    <alternativeName>
        <fullName evidence="1">ATP:glycerol 3-phosphotransferase</fullName>
    </alternativeName>
    <alternativeName>
        <fullName evidence="1">Glycerokinase</fullName>
        <shortName evidence="1">GK</shortName>
    </alternativeName>
</protein>
<accession>A1S2E6</accession>
<organism>
    <name type="scientific">Shewanella amazonensis (strain ATCC BAA-1098 / SB2B)</name>
    <dbReference type="NCBI Taxonomy" id="326297"/>
    <lineage>
        <taxon>Bacteria</taxon>
        <taxon>Pseudomonadati</taxon>
        <taxon>Pseudomonadota</taxon>
        <taxon>Gammaproteobacteria</taxon>
        <taxon>Alteromonadales</taxon>
        <taxon>Shewanellaceae</taxon>
        <taxon>Shewanella</taxon>
    </lineage>
</organism>
<keyword id="KW-0067">ATP-binding</keyword>
<keyword id="KW-0319">Glycerol metabolism</keyword>
<keyword id="KW-0418">Kinase</keyword>
<keyword id="KW-0547">Nucleotide-binding</keyword>
<keyword id="KW-1185">Reference proteome</keyword>
<keyword id="KW-0808">Transferase</keyword>
<feature type="chain" id="PRO_1000020777" description="Glycerol kinase">
    <location>
        <begin position="1"/>
        <end position="495"/>
    </location>
</feature>
<feature type="binding site" evidence="1">
    <location>
        <position position="13"/>
    </location>
    <ligand>
        <name>ADP</name>
        <dbReference type="ChEBI" id="CHEBI:456216"/>
    </ligand>
</feature>
<feature type="binding site" evidence="1">
    <location>
        <position position="13"/>
    </location>
    <ligand>
        <name>ATP</name>
        <dbReference type="ChEBI" id="CHEBI:30616"/>
    </ligand>
</feature>
<feature type="binding site" evidence="1">
    <location>
        <position position="13"/>
    </location>
    <ligand>
        <name>sn-glycerol 3-phosphate</name>
        <dbReference type="ChEBI" id="CHEBI:57597"/>
    </ligand>
</feature>
<feature type="binding site" evidence="1">
    <location>
        <position position="14"/>
    </location>
    <ligand>
        <name>ATP</name>
        <dbReference type="ChEBI" id="CHEBI:30616"/>
    </ligand>
</feature>
<feature type="binding site" evidence="1">
    <location>
        <position position="15"/>
    </location>
    <ligand>
        <name>ATP</name>
        <dbReference type="ChEBI" id="CHEBI:30616"/>
    </ligand>
</feature>
<feature type="binding site" evidence="1">
    <location>
        <position position="17"/>
    </location>
    <ligand>
        <name>ADP</name>
        <dbReference type="ChEBI" id="CHEBI:456216"/>
    </ligand>
</feature>
<feature type="binding site" evidence="1">
    <location>
        <position position="83"/>
    </location>
    <ligand>
        <name>glycerol</name>
        <dbReference type="ChEBI" id="CHEBI:17754"/>
    </ligand>
</feature>
<feature type="binding site" evidence="1">
    <location>
        <position position="83"/>
    </location>
    <ligand>
        <name>sn-glycerol 3-phosphate</name>
        <dbReference type="ChEBI" id="CHEBI:57597"/>
    </ligand>
</feature>
<feature type="binding site" evidence="1">
    <location>
        <position position="84"/>
    </location>
    <ligand>
        <name>glycerol</name>
        <dbReference type="ChEBI" id="CHEBI:17754"/>
    </ligand>
</feature>
<feature type="binding site" evidence="1">
    <location>
        <position position="84"/>
    </location>
    <ligand>
        <name>sn-glycerol 3-phosphate</name>
        <dbReference type="ChEBI" id="CHEBI:57597"/>
    </ligand>
</feature>
<feature type="binding site" evidence="1">
    <location>
        <position position="135"/>
    </location>
    <ligand>
        <name>glycerol</name>
        <dbReference type="ChEBI" id="CHEBI:17754"/>
    </ligand>
</feature>
<feature type="binding site" evidence="1">
    <location>
        <position position="135"/>
    </location>
    <ligand>
        <name>sn-glycerol 3-phosphate</name>
        <dbReference type="ChEBI" id="CHEBI:57597"/>
    </ligand>
</feature>
<feature type="binding site" evidence="1">
    <location>
        <position position="244"/>
    </location>
    <ligand>
        <name>glycerol</name>
        <dbReference type="ChEBI" id="CHEBI:17754"/>
    </ligand>
</feature>
<feature type="binding site" evidence="1">
    <location>
        <position position="244"/>
    </location>
    <ligand>
        <name>sn-glycerol 3-phosphate</name>
        <dbReference type="ChEBI" id="CHEBI:57597"/>
    </ligand>
</feature>
<feature type="binding site" evidence="1">
    <location>
        <position position="245"/>
    </location>
    <ligand>
        <name>glycerol</name>
        <dbReference type="ChEBI" id="CHEBI:17754"/>
    </ligand>
</feature>
<feature type="binding site" evidence="1">
    <location>
        <position position="266"/>
    </location>
    <ligand>
        <name>ADP</name>
        <dbReference type="ChEBI" id="CHEBI:456216"/>
    </ligand>
</feature>
<feature type="binding site" evidence="1">
    <location>
        <position position="266"/>
    </location>
    <ligand>
        <name>ATP</name>
        <dbReference type="ChEBI" id="CHEBI:30616"/>
    </ligand>
</feature>
<feature type="binding site" evidence="1">
    <location>
        <position position="309"/>
    </location>
    <ligand>
        <name>ADP</name>
        <dbReference type="ChEBI" id="CHEBI:456216"/>
    </ligand>
</feature>
<feature type="binding site" evidence="1">
    <location>
        <position position="309"/>
    </location>
    <ligand>
        <name>ATP</name>
        <dbReference type="ChEBI" id="CHEBI:30616"/>
    </ligand>
</feature>
<feature type="binding site" evidence="1">
    <location>
        <position position="313"/>
    </location>
    <ligand>
        <name>ATP</name>
        <dbReference type="ChEBI" id="CHEBI:30616"/>
    </ligand>
</feature>
<feature type="binding site" evidence="1">
    <location>
        <position position="410"/>
    </location>
    <ligand>
        <name>ADP</name>
        <dbReference type="ChEBI" id="CHEBI:456216"/>
    </ligand>
</feature>
<feature type="binding site" evidence="1">
    <location>
        <position position="410"/>
    </location>
    <ligand>
        <name>ATP</name>
        <dbReference type="ChEBI" id="CHEBI:30616"/>
    </ligand>
</feature>
<feature type="binding site" evidence="1">
    <location>
        <position position="414"/>
    </location>
    <ligand>
        <name>ADP</name>
        <dbReference type="ChEBI" id="CHEBI:456216"/>
    </ligand>
</feature>
<name>GLPK_SHEAM</name>
<dbReference type="EC" id="2.7.1.30" evidence="1"/>
<dbReference type="EMBL" id="CP000507">
    <property type="protein sequence ID" value="ABL98552.1"/>
    <property type="molecule type" value="Genomic_DNA"/>
</dbReference>
<dbReference type="RefSeq" id="WP_011758462.1">
    <property type="nucleotide sequence ID" value="NC_008700.1"/>
</dbReference>
<dbReference type="SMR" id="A1S2E6"/>
<dbReference type="STRING" id="326297.Sama_0341"/>
<dbReference type="KEGG" id="saz:Sama_0341"/>
<dbReference type="eggNOG" id="COG0554">
    <property type="taxonomic scope" value="Bacteria"/>
</dbReference>
<dbReference type="HOGENOM" id="CLU_009281_2_3_6"/>
<dbReference type="OrthoDB" id="9805576at2"/>
<dbReference type="UniPathway" id="UPA00618">
    <property type="reaction ID" value="UER00672"/>
</dbReference>
<dbReference type="Proteomes" id="UP000009175">
    <property type="component" value="Chromosome"/>
</dbReference>
<dbReference type="GO" id="GO:0005829">
    <property type="term" value="C:cytosol"/>
    <property type="evidence" value="ECO:0007669"/>
    <property type="project" value="TreeGrafter"/>
</dbReference>
<dbReference type="GO" id="GO:0005524">
    <property type="term" value="F:ATP binding"/>
    <property type="evidence" value="ECO:0007669"/>
    <property type="project" value="UniProtKB-UniRule"/>
</dbReference>
<dbReference type="GO" id="GO:0004370">
    <property type="term" value="F:glycerol kinase activity"/>
    <property type="evidence" value="ECO:0000250"/>
    <property type="project" value="UniProtKB"/>
</dbReference>
<dbReference type="GO" id="GO:0019563">
    <property type="term" value="P:glycerol catabolic process"/>
    <property type="evidence" value="ECO:0007669"/>
    <property type="project" value="UniProtKB-UniRule"/>
</dbReference>
<dbReference type="GO" id="GO:0006071">
    <property type="term" value="P:glycerol metabolic process"/>
    <property type="evidence" value="ECO:0000250"/>
    <property type="project" value="UniProtKB"/>
</dbReference>
<dbReference type="GO" id="GO:0006072">
    <property type="term" value="P:glycerol-3-phosphate metabolic process"/>
    <property type="evidence" value="ECO:0007669"/>
    <property type="project" value="InterPro"/>
</dbReference>
<dbReference type="CDD" id="cd07786">
    <property type="entry name" value="FGGY_EcGK_like"/>
    <property type="match status" value="1"/>
</dbReference>
<dbReference type="FunFam" id="3.30.420.40:FF:000007">
    <property type="entry name" value="Glycerol kinase"/>
    <property type="match status" value="1"/>
</dbReference>
<dbReference type="FunFam" id="3.30.420.40:FF:000008">
    <property type="entry name" value="Glycerol kinase"/>
    <property type="match status" value="1"/>
</dbReference>
<dbReference type="Gene3D" id="3.30.420.40">
    <property type="match status" value="2"/>
</dbReference>
<dbReference type="HAMAP" id="MF_00186">
    <property type="entry name" value="Glycerol_kin"/>
    <property type="match status" value="1"/>
</dbReference>
<dbReference type="InterPro" id="IPR043129">
    <property type="entry name" value="ATPase_NBD"/>
</dbReference>
<dbReference type="InterPro" id="IPR000577">
    <property type="entry name" value="Carb_kinase_FGGY"/>
</dbReference>
<dbReference type="InterPro" id="IPR018483">
    <property type="entry name" value="Carb_kinase_FGGY_CS"/>
</dbReference>
<dbReference type="InterPro" id="IPR018485">
    <property type="entry name" value="FGGY_C"/>
</dbReference>
<dbReference type="InterPro" id="IPR018484">
    <property type="entry name" value="FGGY_N"/>
</dbReference>
<dbReference type="InterPro" id="IPR005999">
    <property type="entry name" value="Glycerol_kin"/>
</dbReference>
<dbReference type="NCBIfam" id="TIGR01311">
    <property type="entry name" value="glycerol_kin"/>
    <property type="match status" value="1"/>
</dbReference>
<dbReference type="NCBIfam" id="NF000756">
    <property type="entry name" value="PRK00047.1"/>
    <property type="match status" value="1"/>
</dbReference>
<dbReference type="PANTHER" id="PTHR10196:SF69">
    <property type="entry name" value="GLYCEROL KINASE"/>
    <property type="match status" value="1"/>
</dbReference>
<dbReference type="PANTHER" id="PTHR10196">
    <property type="entry name" value="SUGAR KINASE"/>
    <property type="match status" value="1"/>
</dbReference>
<dbReference type="Pfam" id="PF02782">
    <property type="entry name" value="FGGY_C"/>
    <property type="match status" value="1"/>
</dbReference>
<dbReference type="Pfam" id="PF00370">
    <property type="entry name" value="FGGY_N"/>
    <property type="match status" value="1"/>
</dbReference>
<dbReference type="PIRSF" id="PIRSF000538">
    <property type="entry name" value="GlpK"/>
    <property type="match status" value="1"/>
</dbReference>
<dbReference type="SUPFAM" id="SSF53067">
    <property type="entry name" value="Actin-like ATPase domain"/>
    <property type="match status" value="2"/>
</dbReference>
<dbReference type="PROSITE" id="PS00933">
    <property type="entry name" value="FGGY_KINASES_1"/>
    <property type="match status" value="1"/>
</dbReference>
<dbReference type="PROSITE" id="PS00445">
    <property type="entry name" value="FGGY_KINASES_2"/>
    <property type="match status" value="1"/>
</dbReference>
<gene>
    <name evidence="1" type="primary">glpK</name>
    <name type="ordered locus">Sama_0341</name>
</gene>
<reference key="1">
    <citation type="submission" date="2006-12" db="EMBL/GenBank/DDBJ databases">
        <title>Complete sequence of Shewanella amazonensis SB2B.</title>
        <authorList>
            <consortium name="US DOE Joint Genome Institute"/>
            <person name="Copeland A."/>
            <person name="Lucas S."/>
            <person name="Lapidus A."/>
            <person name="Barry K."/>
            <person name="Detter J.C."/>
            <person name="Glavina del Rio T."/>
            <person name="Hammon N."/>
            <person name="Israni S."/>
            <person name="Dalin E."/>
            <person name="Tice H."/>
            <person name="Pitluck S."/>
            <person name="Munk A.C."/>
            <person name="Brettin T."/>
            <person name="Bruce D."/>
            <person name="Han C."/>
            <person name="Tapia R."/>
            <person name="Gilna P."/>
            <person name="Schmutz J."/>
            <person name="Larimer F."/>
            <person name="Land M."/>
            <person name="Hauser L."/>
            <person name="Kyrpides N."/>
            <person name="Mikhailova N."/>
            <person name="Fredrickson J."/>
            <person name="Richardson P."/>
        </authorList>
    </citation>
    <scope>NUCLEOTIDE SEQUENCE [LARGE SCALE GENOMIC DNA]</scope>
    <source>
        <strain>ATCC BAA-1098 / SB2B</strain>
    </source>
</reference>
<comment type="function">
    <text evidence="1">Key enzyme in the regulation of glycerol uptake and metabolism. Catalyzes the phosphorylation of glycerol to yield sn-glycerol 3-phosphate.</text>
</comment>
<comment type="catalytic activity">
    <reaction evidence="1">
        <text>glycerol + ATP = sn-glycerol 3-phosphate + ADP + H(+)</text>
        <dbReference type="Rhea" id="RHEA:21644"/>
        <dbReference type="ChEBI" id="CHEBI:15378"/>
        <dbReference type="ChEBI" id="CHEBI:17754"/>
        <dbReference type="ChEBI" id="CHEBI:30616"/>
        <dbReference type="ChEBI" id="CHEBI:57597"/>
        <dbReference type="ChEBI" id="CHEBI:456216"/>
        <dbReference type="EC" id="2.7.1.30"/>
    </reaction>
</comment>
<comment type="activity regulation">
    <text evidence="1">Inhibited by fructose 1,6-bisphosphate (FBP).</text>
</comment>
<comment type="pathway">
    <text evidence="1">Polyol metabolism; glycerol degradation via glycerol kinase pathway; sn-glycerol 3-phosphate from glycerol: step 1/1.</text>
</comment>
<comment type="similarity">
    <text evidence="1">Belongs to the FGGY kinase family.</text>
</comment>